<sequence length="605" mass="69877">MRIKKKNTRGNARNFITRSQAVRKLQVSLADFRRLCIFKGIYPREPRNKKKANKGSTAPTTFYYAKDIQYLMHEPVLAKFREHKTFARKLTRALGRGEVSSAKRLEENRDSYTLDHIIKERYPSFPDAIRDIDDALNMLFLFSNLPSTNQVSSKIINDAQKICNQWLAYVAKERLVRKVFVSIKGVYYQANIKGEEVRWLVPFKFPENIPSDVDFRIMLTFLEFYSTLLHFVLYKLYTDSGLIYPPKLDLKKDKIISGLSSYILESRQEDSLLKLDPTEIEEDVKVESLDASTLKSALNADEANTDETEKEEEQEKKQEKEQEKEQNEETELDTFEDNNKNKGDILIQPSKYDSPVASLFSAFVFYVSREVPIDILEFLILSCGGNVISEAAMDQIENKKDIDMSKVTHQIVDRPVLKNKVAGRTYIQPQWIFDCINKGELVPANKYLPGEALPPHLSPWGDAIGYDPTAPVEEGEEEESESESESEDQVEEEDQEVVAGEEDDDDDEELQAQKELELEAQGIKYSETSEADKDVNKSKNKKRKVDEEEEEKKLKMIMMSNKQKKLYKKMKYSNAKKEEQAENLKKKKKQIAKQKAKLNKLDSKK</sequence>
<feature type="chain" id="PRO_0000186192" description="Pescadillo homolog">
    <location>
        <begin position="1"/>
        <end position="605"/>
    </location>
</feature>
<feature type="domain" description="BRCT" evidence="1">
    <location>
        <begin position="355"/>
        <end position="449"/>
    </location>
</feature>
<feature type="region of interest" description="Sufficient for interaction with ERB1" evidence="9">
    <location>
        <begin position="51"/>
        <end position="484"/>
    </location>
</feature>
<feature type="region of interest" description="Disordered" evidence="2">
    <location>
        <begin position="297"/>
        <end position="342"/>
    </location>
</feature>
<feature type="region of interest" description="Disordered" evidence="2">
    <location>
        <begin position="459"/>
        <end position="605"/>
    </location>
</feature>
<feature type="coiled-coil region" evidence="1">
    <location>
        <begin position="294"/>
        <end position="342"/>
    </location>
</feature>
<feature type="coiled-coil region" evidence="1">
    <location>
        <begin position="530"/>
        <end position="605"/>
    </location>
</feature>
<feature type="compositionally biased region" description="Acidic residues" evidence="2">
    <location>
        <begin position="303"/>
        <end position="312"/>
    </location>
</feature>
<feature type="compositionally biased region" description="Basic and acidic residues" evidence="2">
    <location>
        <begin position="313"/>
        <end position="327"/>
    </location>
</feature>
<feature type="compositionally biased region" description="Acidic residues" evidence="2">
    <location>
        <begin position="473"/>
        <end position="510"/>
    </location>
</feature>
<feature type="compositionally biased region" description="Basic residues" evidence="2">
    <location>
        <begin position="562"/>
        <end position="571"/>
    </location>
</feature>
<feature type="compositionally biased region" description="Basic and acidic residues" evidence="2">
    <location>
        <begin position="575"/>
        <end position="584"/>
    </location>
</feature>
<feature type="compositionally biased region" description="Basic residues" evidence="2">
    <location>
        <begin position="585"/>
        <end position="598"/>
    </location>
</feature>
<feature type="modified residue" description="Phosphoserine" evidence="14">
    <location>
        <position position="288"/>
    </location>
</feature>
<feature type="modified residue" description="Phosphothreonine" evidence="14 15">
    <location>
        <position position="308"/>
    </location>
</feature>
<feature type="mutagenesis site" description="Temperature sensitive mutant." evidence="5">
    <original>I</original>
    <variation>R</variation>
    <location>
        <position position="380"/>
    </location>
</feature>
<feature type="mutagenesis site" description="Temperature sensitive mutant." evidence="5">
    <original>W</original>
    <variation>R</variation>
    <location>
        <position position="431"/>
    </location>
</feature>
<feature type="strand" evidence="16">
    <location>
        <begin position="6"/>
        <end position="14"/>
    </location>
</feature>
<feature type="helix" evidence="16">
    <location>
        <begin position="18"/>
        <end position="25"/>
    </location>
</feature>
<feature type="helix" evidence="16">
    <location>
        <begin position="29"/>
        <end position="39"/>
    </location>
</feature>
<feature type="helix" evidence="16">
    <location>
        <begin position="49"/>
        <end position="52"/>
    </location>
</feature>
<feature type="helix" evidence="16">
    <location>
        <begin position="65"/>
        <end position="72"/>
    </location>
</feature>
<feature type="helix" evidence="16">
    <location>
        <begin position="75"/>
        <end position="95"/>
    </location>
</feature>
<feature type="helix" evidence="16">
    <location>
        <begin position="99"/>
        <end position="107"/>
    </location>
</feature>
<feature type="helix" evidence="16">
    <location>
        <begin position="115"/>
        <end position="121"/>
    </location>
</feature>
<feature type="helix" evidence="16">
    <location>
        <begin position="125"/>
        <end position="143"/>
    </location>
</feature>
<feature type="strand" evidence="16">
    <location>
        <begin position="149"/>
        <end position="151"/>
    </location>
</feature>
<feature type="helix" evidence="16">
    <location>
        <begin position="153"/>
        <end position="173"/>
    </location>
</feature>
<feature type="strand" evidence="16">
    <location>
        <begin position="176"/>
        <end position="184"/>
    </location>
</feature>
<feature type="strand" evidence="16">
    <location>
        <begin position="186"/>
        <end position="192"/>
    </location>
</feature>
<feature type="strand" evidence="16">
    <location>
        <begin position="195"/>
        <end position="201"/>
    </location>
</feature>
<feature type="helix" evidence="16">
    <location>
        <begin position="215"/>
        <end position="239"/>
    </location>
</feature>
<feature type="helix" evidence="16">
    <location>
        <begin position="250"/>
        <end position="253"/>
    </location>
</feature>
<feature type="turn" evidence="16">
    <location>
        <begin position="254"/>
        <end position="256"/>
    </location>
</feature>
<feature type="helix" evidence="16">
    <location>
        <begin position="259"/>
        <end position="261"/>
    </location>
</feature>
<feature type="helix" evidence="16">
    <location>
        <begin position="355"/>
        <end position="358"/>
    </location>
</feature>
<feature type="turn" evidence="16">
    <location>
        <begin position="359"/>
        <end position="362"/>
    </location>
</feature>
<feature type="strand" evidence="16">
    <location>
        <begin position="364"/>
        <end position="367"/>
    </location>
</feature>
<feature type="strand" evidence="16">
    <location>
        <begin position="369"/>
        <end position="371"/>
    </location>
</feature>
<feature type="helix" evidence="16">
    <location>
        <begin position="374"/>
        <end position="381"/>
    </location>
</feature>
<feature type="turn" evidence="16">
    <location>
        <begin position="382"/>
        <end position="384"/>
    </location>
</feature>
<feature type="helix" evidence="16">
    <location>
        <begin position="390"/>
        <end position="392"/>
    </location>
</feature>
<feature type="strand" evidence="16">
    <location>
        <begin position="404"/>
        <end position="406"/>
    </location>
</feature>
<feature type="strand" evidence="16">
    <location>
        <begin position="409"/>
        <end position="411"/>
    </location>
</feature>
<feature type="strand" evidence="16">
    <location>
        <begin position="425"/>
        <end position="427"/>
    </location>
</feature>
<feature type="helix" evidence="16">
    <location>
        <begin position="430"/>
        <end position="438"/>
    </location>
</feature>
<feature type="strand" evidence="16">
    <location>
        <begin position="444"/>
        <end position="447"/>
    </location>
</feature>
<feature type="helix" evidence="16">
    <location>
        <begin position="555"/>
        <end position="558"/>
    </location>
</feature>
<feature type="helix" evidence="16">
    <location>
        <begin position="561"/>
        <end position="593"/>
    </location>
</feature>
<protein>
    <recommendedName>
        <fullName evidence="1 11">Pescadillo homolog</fullName>
    </recommendedName>
    <alternativeName>
        <fullName evidence="10">Nucleolar protein 7</fullName>
    </alternativeName>
    <alternativeName>
        <fullName>Ribosomal RNA-processing protein 13</fullName>
    </alternativeName>
</protein>
<comment type="function">
    <text evidence="1 3 4 5 9">Component of the NOP7 complex, which is required for maturation of the 25S and 5.8S ribosomal RNAs and formation of the 60S ribosome.</text>
</comment>
<comment type="subunit">
    <text evidence="1 5 7 8">Component of the NOP7 complex, composed of ERB1, NOP7 and YTM1. The complex is held together by ERB1, which interacts with NOP7 via its N-terminal domain and with YTM1 via a high-affinity interaction between the seven-bladed beta-propeller domains of the 2 proteins. The NOP7 complex associates with the 66S pre-ribosome (PubMed:16287855). Also interacts with NOG1 (PubMed:16888624). May also associate with the origin recognition complex (ORC complex) (PubMed:12110181).</text>
</comment>
<comment type="interaction">
    <interactant intactId="EBI-13145">
        <id>P53261</id>
    </interactant>
    <interactant intactId="EBI-24538">
        <id>P38779</id>
        <label>CIC1</label>
    </interactant>
    <organismsDiffer>false</organismsDiffer>
    <experiments>5</experiments>
</comment>
<comment type="interaction">
    <interactant intactId="EBI-13145">
        <id>P53261</id>
    </interactant>
    <interactant intactId="EBI-28098">
        <id>Q04660</id>
        <label>ERB1</label>
    </interactant>
    <organismsDiffer>false</organismsDiffer>
    <experiments>11</experiments>
</comment>
<comment type="interaction">
    <interactant intactId="EBI-13145">
        <id>P53261</id>
    </interactant>
    <interactant intactId="EBI-29259">
        <id>P39744</id>
        <label>NOC2</label>
    </interactant>
    <organismsDiffer>false</organismsDiffer>
    <experiments>4</experiments>
</comment>
<comment type="interaction">
    <interactant intactId="EBI-13145">
        <id>P53261</id>
    </interactant>
    <interactant intactId="EBI-12105">
        <id>Q02892</id>
        <label>NOG1</label>
    </interactant>
    <organismsDiffer>false</organismsDiffer>
    <experiments>5</experiments>
</comment>
<comment type="subcellular location">
    <subcellularLocation>
        <location evidence="3">Nucleus</location>
        <location evidence="3">Nucleolus</location>
    </subcellularLocation>
    <subcellularLocation>
        <location>Nucleus</location>
        <location>Nucleoplasm</location>
    </subcellularLocation>
    <text>Accumulates in the nucleolus in response to rapamycin treatment.</text>
</comment>
<comment type="induction">
    <text evidence="5">Expression is down-regulated prior to the diauxic shift.</text>
</comment>
<comment type="disruption phenotype">
    <text evidence="3">Essential gene. Reduced assembly of 60S ribosomes and accumulation of halfmer polyribosomes.</text>
</comment>
<comment type="miscellaneous">
    <text evidence="6">Present with 4530 molecules/cell in log phase SD medium.</text>
</comment>
<comment type="similarity">
    <text evidence="1">Belongs to the pescadillo family.</text>
</comment>
<name>PESC_YEAST</name>
<proteinExistence type="evidence at protein level"/>
<gene>
    <name evidence="1 10" type="primary">NOP7</name>
    <name type="synonym">RRP13</name>
    <name evidence="12" type="synonym">YPH1</name>
    <name evidence="13" type="ordered locus">YGR103W</name>
</gene>
<dbReference type="EMBL" id="Z72888">
    <property type="protein sequence ID" value="CAA97106.1"/>
    <property type="molecule type" value="Genomic_DNA"/>
</dbReference>
<dbReference type="EMBL" id="AY693015">
    <property type="protein sequence ID" value="AAT93034.1"/>
    <property type="molecule type" value="Genomic_DNA"/>
</dbReference>
<dbReference type="EMBL" id="BK006941">
    <property type="protein sequence ID" value="DAA08196.1"/>
    <property type="molecule type" value="Genomic_DNA"/>
</dbReference>
<dbReference type="PIR" id="S64410">
    <property type="entry name" value="S64410"/>
</dbReference>
<dbReference type="RefSeq" id="NP_011617.1">
    <property type="nucleotide sequence ID" value="NM_001181232.1"/>
</dbReference>
<dbReference type="PDB" id="3JCT">
    <property type="method" value="EM"/>
    <property type="resolution" value="3.08 A"/>
    <property type="chains" value="n=1-605"/>
</dbReference>
<dbReference type="PDB" id="5Z3G">
    <property type="method" value="EM"/>
    <property type="resolution" value="3.65 A"/>
    <property type="chains" value="M=1-605"/>
</dbReference>
<dbReference type="PDB" id="6C0F">
    <property type="method" value="EM"/>
    <property type="resolution" value="3.70 A"/>
    <property type="chains" value="n=1-605"/>
</dbReference>
<dbReference type="PDB" id="6CB1">
    <property type="method" value="EM"/>
    <property type="resolution" value="4.60 A"/>
    <property type="chains" value="n=1-605"/>
</dbReference>
<dbReference type="PDB" id="6ELZ">
    <property type="method" value="EM"/>
    <property type="resolution" value="3.30 A"/>
    <property type="chains" value="n=1-605"/>
</dbReference>
<dbReference type="PDB" id="6EM1">
    <property type="method" value="EM"/>
    <property type="resolution" value="3.60 A"/>
    <property type="chains" value="n=1-605"/>
</dbReference>
<dbReference type="PDB" id="6EM3">
    <property type="method" value="EM"/>
    <property type="resolution" value="3.20 A"/>
    <property type="chains" value="n=1-605"/>
</dbReference>
<dbReference type="PDB" id="6EM4">
    <property type="method" value="EM"/>
    <property type="resolution" value="4.10 A"/>
    <property type="chains" value="n=1-605"/>
</dbReference>
<dbReference type="PDB" id="6EM5">
    <property type="method" value="EM"/>
    <property type="resolution" value="4.30 A"/>
    <property type="chains" value="n=1-605"/>
</dbReference>
<dbReference type="PDB" id="6FT6">
    <property type="method" value="EM"/>
    <property type="resolution" value="3.90 A"/>
    <property type="chains" value="n=1-605"/>
</dbReference>
<dbReference type="PDB" id="6M62">
    <property type="method" value="EM"/>
    <property type="resolution" value="3.20 A"/>
    <property type="chains" value="n=1-605"/>
</dbReference>
<dbReference type="PDB" id="6YLX">
    <property type="method" value="EM"/>
    <property type="resolution" value="3.90 A"/>
    <property type="chains" value="n=1-605"/>
</dbReference>
<dbReference type="PDB" id="6YLY">
    <property type="method" value="EM"/>
    <property type="resolution" value="3.80 A"/>
    <property type="chains" value="n=1-605"/>
</dbReference>
<dbReference type="PDB" id="7BTB">
    <property type="method" value="EM"/>
    <property type="resolution" value="3.22 A"/>
    <property type="chains" value="n=1-605"/>
</dbReference>
<dbReference type="PDB" id="7NAC">
    <property type="method" value="EM"/>
    <property type="resolution" value="3.04 A"/>
    <property type="chains" value="n=1-605"/>
</dbReference>
<dbReference type="PDB" id="7NAD">
    <property type="method" value="EM"/>
    <property type="resolution" value="3.04 A"/>
    <property type="chains" value="n=1-110"/>
</dbReference>
<dbReference type="PDB" id="7OHP">
    <property type="method" value="EM"/>
    <property type="resolution" value="3.90 A"/>
    <property type="chains" value="n=1-605"/>
</dbReference>
<dbReference type="PDB" id="7OHQ">
    <property type="method" value="EM"/>
    <property type="resolution" value="3.10 A"/>
    <property type="chains" value="n=1-605"/>
</dbReference>
<dbReference type="PDB" id="7OHR">
    <property type="method" value="EM"/>
    <property type="resolution" value="4.72 A"/>
    <property type="chains" value="n=1-605"/>
</dbReference>
<dbReference type="PDB" id="7OHS">
    <property type="method" value="EM"/>
    <property type="resolution" value="4.38 A"/>
    <property type="chains" value="n=1-605"/>
</dbReference>
<dbReference type="PDB" id="7OHV">
    <property type="method" value="EM"/>
    <property type="resolution" value="3.90 A"/>
    <property type="chains" value="n=1-605"/>
</dbReference>
<dbReference type="PDB" id="7OHW">
    <property type="method" value="EM"/>
    <property type="resolution" value="3.50 A"/>
    <property type="chains" value="n=1-605"/>
</dbReference>
<dbReference type="PDB" id="7OHX">
    <property type="method" value="EM"/>
    <property type="resolution" value="3.30 A"/>
    <property type="chains" value="n=1-605"/>
</dbReference>
<dbReference type="PDB" id="7R6Q">
    <property type="method" value="EM"/>
    <property type="resolution" value="2.98 A"/>
    <property type="chains" value="n=1-605"/>
</dbReference>
<dbReference type="PDB" id="7R72">
    <property type="method" value="EM"/>
    <property type="resolution" value="3.07 A"/>
    <property type="chains" value="n=1-110"/>
</dbReference>
<dbReference type="PDB" id="7R7A">
    <property type="method" value="EM"/>
    <property type="resolution" value="3.04 A"/>
    <property type="chains" value="n=1-605"/>
</dbReference>
<dbReference type="PDB" id="7U0H">
    <property type="method" value="EM"/>
    <property type="resolution" value="2.76 A"/>
    <property type="chains" value="n=1-605"/>
</dbReference>
<dbReference type="PDB" id="7UOO">
    <property type="method" value="EM"/>
    <property type="resolution" value="2.34 A"/>
    <property type="chains" value="n=1-605"/>
</dbReference>
<dbReference type="PDB" id="7UQB">
    <property type="method" value="EM"/>
    <property type="resolution" value="2.43 A"/>
    <property type="chains" value="n=1-605"/>
</dbReference>
<dbReference type="PDB" id="7UQZ">
    <property type="method" value="EM"/>
    <property type="resolution" value="2.44 A"/>
    <property type="chains" value="n=1-605"/>
</dbReference>
<dbReference type="PDB" id="7V08">
    <property type="method" value="EM"/>
    <property type="resolution" value="2.36 A"/>
    <property type="chains" value="n=1-605"/>
</dbReference>
<dbReference type="PDB" id="8E5T">
    <property type="method" value="EM"/>
    <property type="resolution" value="4.00 A"/>
    <property type="chains" value="n=1-605"/>
</dbReference>
<dbReference type="PDB" id="8V83">
    <property type="method" value="EM"/>
    <property type="resolution" value="2.53 A"/>
    <property type="chains" value="n=1-605"/>
</dbReference>
<dbReference type="PDB" id="8V84">
    <property type="method" value="EM"/>
    <property type="resolution" value="2.70 A"/>
    <property type="chains" value="n=1-605"/>
</dbReference>
<dbReference type="PDB" id="8V87">
    <property type="method" value="EM"/>
    <property type="resolution" value="2.66 A"/>
    <property type="chains" value="n=1-605"/>
</dbReference>
<dbReference type="PDBsum" id="3JCT"/>
<dbReference type="PDBsum" id="5Z3G"/>
<dbReference type="PDBsum" id="6C0F"/>
<dbReference type="PDBsum" id="6CB1"/>
<dbReference type="PDBsum" id="6ELZ"/>
<dbReference type="PDBsum" id="6EM1"/>
<dbReference type="PDBsum" id="6EM3"/>
<dbReference type="PDBsum" id="6EM4"/>
<dbReference type="PDBsum" id="6EM5"/>
<dbReference type="PDBsum" id="6FT6"/>
<dbReference type="PDBsum" id="6M62"/>
<dbReference type="PDBsum" id="6YLX"/>
<dbReference type="PDBsum" id="6YLY"/>
<dbReference type="PDBsum" id="7BTB"/>
<dbReference type="PDBsum" id="7NAC"/>
<dbReference type="PDBsum" id="7NAD"/>
<dbReference type="PDBsum" id="7OHP"/>
<dbReference type="PDBsum" id="7OHQ"/>
<dbReference type="PDBsum" id="7OHR"/>
<dbReference type="PDBsum" id="7OHS"/>
<dbReference type="PDBsum" id="7OHV"/>
<dbReference type="PDBsum" id="7OHW"/>
<dbReference type="PDBsum" id="7OHX"/>
<dbReference type="PDBsum" id="7R6Q"/>
<dbReference type="PDBsum" id="7R72"/>
<dbReference type="PDBsum" id="7R7A"/>
<dbReference type="PDBsum" id="7U0H"/>
<dbReference type="PDBsum" id="7UOO"/>
<dbReference type="PDBsum" id="7UQB"/>
<dbReference type="PDBsum" id="7UQZ"/>
<dbReference type="PDBsum" id="7V08"/>
<dbReference type="PDBsum" id="8E5T"/>
<dbReference type="PDBsum" id="8V83"/>
<dbReference type="PDBsum" id="8V84"/>
<dbReference type="PDBsum" id="8V87"/>
<dbReference type="EMDB" id="EMD-12904"/>
<dbReference type="EMDB" id="EMD-12905"/>
<dbReference type="EMDB" id="EMD-12906"/>
<dbReference type="EMDB" id="EMD-12907"/>
<dbReference type="EMDB" id="EMD-12910"/>
<dbReference type="EMDB" id="EMD-12911"/>
<dbReference type="EMDB" id="EMD-12912"/>
<dbReference type="EMDB" id="EMD-24269"/>
<dbReference type="EMDB" id="EMD-24270"/>
<dbReference type="EMDB" id="EMD-24286"/>
<dbReference type="EMDB" id="EMD-24290"/>
<dbReference type="EMDB" id="EMD-24296"/>
<dbReference type="EMDB" id="EMD-26259"/>
<dbReference type="EMDB" id="EMD-26651"/>
<dbReference type="EMDB" id="EMD-26686"/>
<dbReference type="EMDB" id="EMD-26703"/>
<dbReference type="EMDB" id="EMD-26941"/>
<dbReference type="EMDB" id="EMD-27919"/>
<dbReference type="EMDB" id="EMD-30108"/>
<dbReference type="EMDB" id="EMD-30174"/>
<dbReference type="EMDB" id="EMD-43017"/>
<dbReference type="EMDB" id="EMD-4302"/>
<dbReference type="EMDB" id="EMD-43021"/>
<dbReference type="EMDB" id="EMD-43027"/>
<dbReference type="EMDB" id="EMD-6878"/>
<dbReference type="EMDB" id="EMD-7324"/>
<dbReference type="EMDB" id="EMD-7445"/>
<dbReference type="SMR" id="P53261"/>
<dbReference type="BioGRID" id="33346">
    <property type="interactions" value="562"/>
</dbReference>
<dbReference type="ComplexPortal" id="CPX-1862">
    <property type="entry name" value="PeBoW complex"/>
</dbReference>
<dbReference type="DIP" id="DIP-6326N"/>
<dbReference type="FunCoup" id="P53261">
    <property type="interactions" value="1640"/>
</dbReference>
<dbReference type="IntAct" id="P53261">
    <property type="interactions" value="121"/>
</dbReference>
<dbReference type="MINT" id="P53261"/>
<dbReference type="STRING" id="4932.YGR103W"/>
<dbReference type="iPTMnet" id="P53261"/>
<dbReference type="PaxDb" id="4932-YGR103W"/>
<dbReference type="PeptideAtlas" id="P53261"/>
<dbReference type="EnsemblFungi" id="YGR103W_mRNA">
    <property type="protein sequence ID" value="YGR103W"/>
    <property type="gene ID" value="YGR103W"/>
</dbReference>
<dbReference type="GeneID" id="852995"/>
<dbReference type="KEGG" id="sce:YGR103W"/>
<dbReference type="AGR" id="SGD:S000003335"/>
<dbReference type="SGD" id="S000003335">
    <property type="gene designation" value="NOP7"/>
</dbReference>
<dbReference type="VEuPathDB" id="FungiDB:YGR103W"/>
<dbReference type="eggNOG" id="KOG2481">
    <property type="taxonomic scope" value="Eukaryota"/>
</dbReference>
<dbReference type="GeneTree" id="ENSGT00390000002626"/>
<dbReference type="HOGENOM" id="CLU_019619_1_1_1"/>
<dbReference type="InParanoid" id="P53261"/>
<dbReference type="OMA" id="QKVTWIV"/>
<dbReference type="OrthoDB" id="10264910at2759"/>
<dbReference type="BioCyc" id="YEAST:G3O-30813-MONOMER"/>
<dbReference type="Reactome" id="R-SCE-6791226">
    <property type="pathway name" value="Major pathway of rRNA processing in the nucleolus and cytosol"/>
</dbReference>
<dbReference type="BioGRID-ORCS" id="852995">
    <property type="hits" value="0 hits in 10 CRISPR screens"/>
</dbReference>
<dbReference type="CD-CODE" id="BDAE0F88">
    <property type="entry name" value="Nucleolus"/>
</dbReference>
<dbReference type="CD-CODE" id="E03F929F">
    <property type="entry name" value="Stress granule"/>
</dbReference>
<dbReference type="PRO" id="PR:P53261"/>
<dbReference type="Proteomes" id="UP000002311">
    <property type="component" value="Chromosome VII"/>
</dbReference>
<dbReference type="RNAct" id="P53261">
    <property type="molecule type" value="protein"/>
</dbReference>
<dbReference type="GO" id="GO:0005730">
    <property type="term" value="C:nucleolus"/>
    <property type="evidence" value="ECO:0000314"/>
    <property type="project" value="SGD"/>
</dbReference>
<dbReference type="GO" id="GO:0005654">
    <property type="term" value="C:nucleoplasm"/>
    <property type="evidence" value="ECO:0007669"/>
    <property type="project" value="UniProtKB-SubCell"/>
</dbReference>
<dbReference type="GO" id="GO:0005634">
    <property type="term" value="C:nucleus"/>
    <property type="evidence" value="ECO:0000314"/>
    <property type="project" value="SGD"/>
</dbReference>
<dbReference type="GO" id="GO:0070545">
    <property type="term" value="C:PeBoW complex"/>
    <property type="evidence" value="ECO:0000314"/>
    <property type="project" value="SGD"/>
</dbReference>
<dbReference type="GO" id="GO:0030687">
    <property type="term" value="C:preribosome, large subunit precursor"/>
    <property type="evidence" value="ECO:0000314"/>
    <property type="project" value="SGD"/>
</dbReference>
<dbReference type="GO" id="GO:0070180">
    <property type="term" value="F:large ribosomal subunit rRNA binding"/>
    <property type="evidence" value="ECO:0000314"/>
    <property type="project" value="GO_Central"/>
</dbReference>
<dbReference type="GO" id="GO:0003729">
    <property type="term" value="F:mRNA binding"/>
    <property type="evidence" value="ECO:0007005"/>
    <property type="project" value="SGD"/>
</dbReference>
<dbReference type="GO" id="GO:0043021">
    <property type="term" value="F:ribonucleoprotein complex binding"/>
    <property type="evidence" value="ECO:0007669"/>
    <property type="project" value="UniProtKB-UniRule"/>
</dbReference>
<dbReference type="GO" id="GO:0003723">
    <property type="term" value="F:RNA binding"/>
    <property type="evidence" value="ECO:0000318"/>
    <property type="project" value="GO_Central"/>
</dbReference>
<dbReference type="GO" id="GO:0019843">
    <property type="term" value="F:rRNA binding"/>
    <property type="evidence" value="ECO:0000314"/>
    <property type="project" value="SGD"/>
</dbReference>
<dbReference type="GO" id="GO:0000466">
    <property type="term" value="P:maturation of 5.8S rRNA from tricistronic rRNA transcript (SSU-rRNA, 5.8S rRNA, LSU-rRNA)"/>
    <property type="evidence" value="ECO:0007669"/>
    <property type="project" value="UniProtKB-UniRule"/>
</dbReference>
<dbReference type="GO" id="GO:0000463">
    <property type="term" value="P:maturation of LSU-rRNA from tricistronic rRNA transcript (SSU-rRNA, 5.8S rRNA, LSU-rRNA)"/>
    <property type="evidence" value="ECO:0000318"/>
    <property type="project" value="GO_Central"/>
</dbReference>
<dbReference type="GO" id="GO:0000462">
    <property type="term" value="P:maturation of SSU-rRNA from tricistronic rRNA transcript (SSU-rRNA, 5.8S rRNA, LSU-rRNA)"/>
    <property type="evidence" value="ECO:0000315"/>
    <property type="project" value="SGD"/>
</dbReference>
<dbReference type="GO" id="GO:0042273">
    <property type="term" value="P:ribosomal large subunit biogenesis"/>
    <property type="evidence" value="ECO:0000314"/>
    <property type="project" value="ComplexPortal"/>
</dbReference>
<dbReference type="GO" id="GO:0006364">
    <property type="term" value="P:rRNA processing"/>
    <property type="evidence" value="ECO:0000314"/>
    <property type="project" value="ComplexPortal"/>
</dbReference>
<dbReference type="CDD" id="cd17709">
    <property type="entry name" value="BRCT_pescadillo_like"/>
    <property type="match status" value="1"/>
</dbReference>
<dbReference type="FunFam" id="3.40.50.10190:FF:000067">
    <property type="entry name" value="Pescadillo homolog"/>
    <property type="match status" value="1"/>
</dbReference>
<dbReference type="Gene3D" id="3.40.50.10190">
    <property type="entry name" value="BRCT domain"/>
    <property type="match status" value="1"/>
</dbReference>
<dbReference type="HAMAP" id="MF_03028">
    <property type="entry name" value="Pescadillo"/>
    <property type="match status" value="1"/>
</dbReference>
<dbReference type="InterPro" id="IPR001357">
    <property type="entry name" value="BRCT_dom"/>
</dbReference>
<dbReference type="InterPro" id="IPR036420">
    <property type="entry name" value="BRCT_dom_sf"/>
</dbReference>
<dbReference type="InterPro" id="IPR010613">
    <property type="entry name" value="PES"/>
</dbReference>
<dbReference type="PANTHER" id="PTHR12221">
    <property type="entry name" value="PESCADILLO - RELATED"/>
    <property type="match status" value="1"/>
</dbReference>
<dbReference type="PANTHER" id="PTHR12221:SF6">
    <property type="entry name" value="PESCADILLO HOMOLOG"/>
    <property type="match status" value="1"/>
</dbReference>
<dbReference type="Pfam" id="PF16589">
    <property type="entry name" value="BRCT_2"/>
    <property type="match status" value="1"/>
</dbReference>
<dbReference type="Pfam" id="PF06732">
    <property type="entry name" value="Pescadillo_N"/>
    <property type="match status" value="1"/>
</dbReference>
<dbReference type="SMART" id="SM00292">
    <property type="entry name" value="BRCT"/>
    <property type="match status" value="1"/>
</dbReference>
<dbReference type="SUPFAM" id="SSF52113">
    <property type="entry name" value="BRCT domain"/>
    <property type="match status" value="1"/>
</dbReference>
<dbReference type="PROSITE" id="PS50172">
    <property type="entry name" value="BRCT"/>
    <property type="match status" value="1"/>
</dbReference>
<accession>P53261</accession>
<accession>D6VUN5</accession>
<organism>
    <name type="scientific">Saccharomyces cerevisiae (strain ATCC 204508 / S288c)</name>
    <name type="common">Baker's yeast</name>
    <dbReference type="NCBI Taxonomy" id="559292"/>
    <lineage>
        <taxon>Eukaryota</taxon>
        <taxon>Fungi</taxon>
        <taxon>Dikarya</taxon>
        <taxon>Ascomycota</taxon>
        <taxon>Saccharomycotina</taxon>
        <taxon>Saccharomycetes</taxon>
        <taxon>Saccharomycetales</taxon>
        <taxon>Saccharomycetaceae</taxon>
        <taxon>Saccharomyces</taxon>
    </lineage>
</organism>
<evidence type="ECO:0000255" key="1">
    <source>
        <dbReference type="HAMAP-Rule" id="MF_03028"/>
    </source>
</evidence>
<evidence type="ECO:0000256" key="2">
    <source>
        <dbReference type="SAM" id="MobiDB-lite"/>
    </source>
</evidence>
<evidence type="ECO:0000269" key="3">
    <source>
    </source>
</evidence>
<evidence type="ECO:0000269" key="4">
    <source>
    </source>
</evidence>
<evidence type="ECO:0000269" key="5">
    <source>
    </source>
</evidence>
<evidence type="ECO:0000269" key="6">
    <source>
    </source>
</evidence>
<evidence type="ECO:0000269" key="7">
    <source>
    </source>
</evidence>
<evidence type="ECO:0000269" key="8">
    <source>
    </source>
</evidence>
<evidence type="ECO:0000269" key="9">
    <source>
    </source>
</evidence>
<evidence type="ECO:0000303" key="10">
    <source>
    </source>
</evidence>
<evidence type="ECO:0000303" key="11">
    <source>
    </source>
</evidence>
<evidence type="ECO:0000303" key="12">
    <source>
    </source>
</evidence>
<evidence type="ECO:0000312" key="13">
    <source>
        <dbReference type="SGD" id="S000003335"/>
    </source>
</evidence>
<evidence type="ECO:0007744" key="14">
    <source>
    </source>
</evidence>
<evidence type="ECO:0007744" key="15">
    <source>
    </source>
</evidence>
<evidence type="ECO:0007829" key="16">
    <source>
        <dbReference type="PDB" id="7R6Q"/>
    </source>
</evidence>
<keyword id="KW-0002">3D-structure</keyword>
<keyword id="KW-0175">Coiled coil</keyword>
<keyword id="KW-0903">Direct protein sequencing</keyword>
<keyword id="KW-0539">Nucleus</keyword>
<keyword id="KW-0597">Phosphoprotein</keyword>
<keyword id="KW-1185">Reference proteome</keyword>
<keyword id="KW-0690">Ribosome biogenesis</keyword>
<keyword id="KW-0698">rRNA processing</keyword>
<reference key="1">
    <citation type="journal article" date="1997" name="Nature">
        <title>The nucleotide sequence of Saccharomyces cerevisiae chromosome VII.</title>
        <authorList>
            <person name="Tettelin H."/>
            <person name="Agostoni-Carbone M.L."/>
            <person name="Albermann K."/>
            <person name="Albers M."/>
            <person name="Arroyo J."/>
            <person name="Backes U."/>
            <person name="Barreiros T."/>
            <person name="Bertani I."/>
            <person name="Bjourson A.J."/>
            <person name="Brueckner M."/>
            <person name="Bruschi C.V."/>
            <person name="Carignani G."/>
            <person name="Castagnoli L."/>
            <person name="Cerdan E."/>
            <person name="Clemente M.L."/>
            <person name="Coblenz A."/>
            <person name="Coglievina M."/>
            <person name="Coissac E."/>
            <person name="Defoor E."/>
            <person name="Del Bino S."/>
            <person name="Delius H."/>
            <person name="Delneri D."/>
            <person name="de Wergifosse P."/>
            <person name="Dujon B."/>
            <person name="Durand P."/>
            <person name="Entian K.-D."/>
            <person name="Eraso P."/>
            <person name="Escribano V."/>
            <person name="Fabiani L."/>
            <person name="Fartmann B."/>
            <person name="Feroli F."/>
            <person name="Feuermann M."/>
            <person name="Frontali L."/>
            <person name="Garcia-Gonzalez M."/>
            <person name="Garcia-Saez M.I."/>
            <person name="Goffeau A."/>
            <person name="Guerreiro P."/>
            <person name="Hani J."/>
            <person name="Hansen M."/>
            <person name="Hebling U."/>
            <person name="Hernandez K."/>
            <person name="Heumann K."/>
            <person name="Hilger F."/>
            <person name="Hofmann B."/>
            <person name="Indge K.J."/>
            <person name="James C.M."/>
            <person name="Klima R."/>
            <person name="Koetter P."/>
            <person name="Kramer B."/>
            <person name="Kramer W."/>
            <person name="Lauquin G."/>
            <person name="Leuther H."/>
            <person name="Louis E.J."/>
            <person name="Maillier E."/>
            <person name="Marconi A."/>
            <person name="Martegani E."/>
            <person name="Mazon M.J."/>
            <person name="Mazzoni C."/>
            <person name="McReynolds A.D.K."/>
            <person name="Melchioretto P."/>
            <person name="Mewes H.-W."/>
            <person name="Minenkova O."/>
            <person name="Mueller-Auer S."/>
            <person name="Nawrocki A."/>
            <person name="Netter P."/>
            <person name="Neu R."/>
            <person name="Nombela C."/>
            <person name="Oliver S.G."/>
            <person name="Panzeri L."/>
            <person name="Paoluzi S."/>
            <person name="Plevani P."/>
            <person name="Portetelle D."/>
            <person name="Portillo F."/>
            <person name="Potier S."/>
            <person name="Purnelle B."/>
            <person name="Rieger M."/>
            <person name="Riles L."/>
            <person name="Rinaldi T."/>
            <person name="Robben J."/>
            <person name="Rodrigues-Pousada C."/>
            <person name="Rodriguez-Belmonte E."/>
            <person name="Rodriguez-Torres A.M."/>
            <person name="Rose M."/>
            <person name="Ruzzi M."/>
            <person name="Saliola M."/>
            <person name="Sanchez-Perez M."/>
            <person name="Schaefer B."/>
            <person name="Schaefer M."/>
            <person name="Scharfe M."/>
            <person name="Schmidheini T."/>
            <person name="Schreer A."/>
            <person name="Skala J."/>
            <person name="Souciet J.-L."/>
            <person name="Steensma H.Y."/>
            <person name="Talla E."/>
            <person name="Thierry A."/>
            <person name="Vandenbol M."/>
            <person name="van der Aart Q.J.M."/>
            <person name="Van Dyck L."/>
            <person name="Vanoni M."/>
            <person name="Verhasselt P."/>
            <person name="Voet M."/>
            <person name="Volckaert G."/>
            <person name="Wambutt R."/>
            <person name="Watson M.D."/>
            <person name="Weber N."/>
            <person name="Wedler E."/>
            <person name="Wedler H."/>
            <person name="Wipfli P."/>
            <person name="Wolf K."/>
            <person name="Wright L.F."/>
            <person name="Zaccaria P."/>
            <person name="Zimmermann M."/>
            <person name="Zollner A."/>
            <person name="Kleine K."/>
        </authorList>
    </citation>
    <scope>NUCLEOTIDE SEQUENCE [LARGE SCALE GENOMIC DNA]</scope>
    <source>
        <strain>ATCC 204508 / S288c</strain>
    </source>
</reference>
<reference key="2">
    <citation type="journal article" date="2014" name="G3 (Bethesda)">
        <title>The reference genome sequence of Saccharomyces cerevisiae: Then and now.</title>
        <authorList>
            <person name="Engel S.R."/>
            <person name="Dietrich F.S."/>
            <person name="Fisk D.G."/>
            <person name="Binkley G."/>
            <person name="Balakrishnan R."/>
            <person name="Costanzo M.C."/>
            <person name="Dwight S.S."/>
            <person name="Hitz B.C."/>
            <person name="Karra K."/>
            <person name="Nash R.S."/>
            <person name="Weng S."/>
            <person name="Wong E.D."/>
            <person name="Lloyd P."/>
            <person name="Skrzypek M.S."/>
            <person name="Miyasato S.R."/>
            <person name="Simison M."/>
            <person name="Cherry J.M."/>
        </authorList>
    </citation>
    <scope>GENOME REANNOTATION</scope>
    <source>
        <strain>ATCC 204508 / S288c</strain>
    </source>
</reference>
<reference key="3">
    <citation type="journal article" date="2007" name="Genome Res.">
        <title>Approaching a complete repository of sequence-verified protein-encoding clones for Saccharomyces cerevisiae.</title>
        <authorList>
            <person name="Hu Y."/>
            <person name="Rolfs A."/>
            <person name="Bhullar B."/>
            <person name="Murthy T.V.S."/>
            <person name="Zhu C."/>
            <person name="Berger M.F."/>
            <person name="Camargo A.A."/>
            <person name="Kelley F."/>
            <person name="McCarron S."/>
            <person name="Jepson D."/>
            <person name="Richardson A."/>
            <person name="Raphael J."/>
            <person name="Moreira D."/>
            <person name="Taycher E."/>
            <person name="Zuo D."/>
            <person name="Mohr S."/>
            <person name="Kane M.F."/>
            <person name="Williamson J."/>
            <person name="Simpson A.J.G."/>
            <person name="Bulyk M.L."/>
            <person name="Harlow E."/>
            <person name="Marsischky G."/>
            <person name="Kolodner R.D."/>
            <person name="LaBaer J."/>
        </authorList>
    </citation>
    <scope>NUCLEOTIDE SEQUENCE [GENOMIC DNA]</scope>
    <source>
        <strain>ATCC 204508 / S288c</strain>
    </source>
</reference>
<reference key="4">
    <citation type="journal article" date="2002" name="Cell">
        <title>Yph1p, an ORC-interacting protein: potential links between cell proliferation control, DNA replication, and ribosome biogenesis.</title>
        <authorList>
            <person name="Du Y.-C.N."/>
            <person name="Stillman B."/>
        </authorList>
    </citation>
    <scope>PARTIAL PROTEIN SEQUENCE</scope>
    <scope>FUNCTION</scope>
    <scope>IDENTIFICATION BY MASS SPECTROMETRY</scope>
    <scope>IDENTIFICATION IN THE NOP7 COMPLEX</scope>
    <scope>ASSOCIATION WITH THE ORC COMPLEX</scope>
    <scope>SUBCELLULAR LOCATION</scope>
    <scope>DELETION PHENOTYPE</scope>
    <scope>INDUCTION</scope>
    <scope>MUTAGENESIS OF ILE-380 AND TRP-431</scope>
</reference>
<reference key="5">
    <citation type="journal article" date="2002" name="RNA">
        <title>Saccharomyces cerevisiae nucleolar protein Nop7p is necessary for biogenesis of 60S ribosomal subunits.</title>
        <authorList>
            <person name="Adams C.C."/>
            <person name="Jakovljevic J."/>
            <person name="Roman J."/>
            <person name="Harnpicharnchai P."/>
            <person name="Woolford J.L. Jr."/>
        </authorList>
    </citation>
    <scope>FUNCTION</scope>
    <scope>SUBCELLULAR LOCATION</scope>
    <scope>DISRUPTION PHENOTYPE</scope>
</reference>
<reference key="6">
    <citation type="journal article" date="2002" name="RNA">
        <title>Yeast Pescadillo is required for multiple activities during 60S ribosomal subunit synthesis.</title>
        <authorList>
            <person name="Oeffinger M."/>
            <person name="Leung A."/>
            <person name="Lamond A."/>
            <person name="Tollervey D."/>
        </authorList>
    </citation>
    <scope>FUNCTION</scope>
    <scope>SUBCELLULAR LOCATION</scope>
</reference>
<reference key="7">
    <citation type="journal article" date="2002" name="RNA">
        <authorList>
            <person name="Oeffinger M."/>
            <person name="Leung A."/>
            <person name="Lamond A."/>
            <person name="Tollervey D."/>
        </authorList>
    </citation>
    <scope>ERRATUM OF PUBMED:12022229</scope>
</reference>
<reference key="8">
    <citation type="journal article" date="2003" name="Nature">
        <title>Global analysis of protein expression in yeast.</title>
        <authorList>
            <person name="Ghaemmaghami S."/>
            <person name="Huh W.-K."/>
            <person name="Bower K."/>
            <person name="Howson R.W."/>
            <person name="Belle A."/>
            <person name="Dephoure N."/>
            <person name="O'Shea E.K."/>
            <person name="Weissman J.S."/>
        </authorList>
    </citation>
    <scope>LEVEL OF PROTEIN EXPRESSION [LARGE SCALE ANALYSIS]</scope>
</reference>
<reference key="9">
    <citation type="journal article" date="2005" name="Mol. Cell. Biol.">
        <title>Ytm1, Nop7, and Erb1 form a complex necessary for maturation of yeast 66S preribosomes.</title>
        <authorList>
            <person name="Miles T.D."/>
            <person name="Jakovljevic J."/>
            <person name="Horsey E.W."/>
            <person name="Harnpicharnchai P."/>
            <person name="Tang L."/>
            <person name="Woolford J.L. Jr."/>
        </authorList>
    </citation>
    <scope>IDENTIFICATION IN THE NOP7 COMPLEX WITH ERB1 AND YTM1</scope>
    <scope>ASSOCIATION OF THE NOP7 COMPLEX WITH 66S PRE-RIBOSOMES</scope>
</reference>
<reference key="10">
    <citation type="journal article" date="2006" name="EMBO J.">
        <title>TOR regulates late steps of ribosome maturation in the nucleoplasm via Nog1 in response to nutrients.</title>
        <authorList>
            <person name="Honma Y."/>
            <person name="Kitamura A."/>
            <person name="Shioda R."/>
            <person name="Maruyama H."/>
            <person name="Ozaki K."/>
            <person name="Oda Y."/>
            <person name="Mini T."/>
            <person name="Jenoe P."/>
            <person name="Maki Y."/>
            <person name="Yonezawa K."/>
            <person name="Hurt E."/>
            <person name="Ueno M."/>
            <person name="Uritani M."/>
            <person name="Hall M.N."/>
            <person name="Ushimaru T."/>
        </authorList>
    </citation>
    <scope>INTERACTION WITH NOG1</scope>
    <scope>SUBCELLULAR LOCATION</scope>
</reference>
<reference key="11">
    <citation type="journal article" date="2008" name="Mol. Biol. Cell">
        <title>Interactions among Ytm1, Erb1, and Nop7 required for assembly of the Nop7-subcomplex in yeast preribosomes.</title>
        <authorList>
            <person name="Tang L."/>
            <person name="Sahasranaman A."/>
            <person name="Jakovljevic J."/>
            <person name="Schleifman E."/>
            <person name="Woolford J.L. Jr."/>
        </authorList>
    </citation>
    <scope>FUNCTION</scope>
    <scope>CHARACTERIZATION OF THE NOP7 COMPLEX</scope>
    <scope>SUBCELLULAR LOCATION</scope>
</reference>
<reference key="12">
    <citation type="journal article" date="2008" name="Mol. Cell. Proteomics">
        <title>A multidimensional chromatography technology for in-depth phosphoproteome analysis.</title>
        <authorList>
            <person name="Albuquerque C.P."/>
            <person name="Smolka M.B."/>
            <person name="Payne S.H."/>
            <person name="Bafna V."/>
            <person name="Eng J."/>
            <person name="Zhou H."/>
        </authorList>
    </citation>
    <scope>PHOSPHORYLATION [LARGE SCALE ANALYSIS] AT SER-288 AND THR-308</scope>
    <scope>IDENTIFICATION BY MASS SPECTROMETRY [LARGE SCALE ANALYSIS]</scope>
</reference>
<reference key="13">
    <citation type="journal article" date="2009" name="Science">
        <title>Global analysis of Cdk1 substrate phosphorylation sites provides insights into evolution.</title>
        <authorList>
            <person name="Holt L.J."/>
            <person name="Tuch B.B."/>
            <person name="Villen J."/>
            <person name="Johnson A.D."/>
            <person name="Gygi S.P."/>
            <person name="Morgan D.O."/>
        </authorList>
    </citation>
    <scope>PHOSPHORYLATION [LARGE SCALE ANALYSIS] AT THR-308</scope>
    <scope>IDENTIFICATION BY MASS SPECTROMETRY [LARGE SCALE ANALYSIS]</scope>
</reference>